<protein>
    <recommendedName>
        <fullName evidence="1">NADH-quinone oxidoreductase subunit C/D</fullName>
        <ecNumber evidence="1">7.1.1.-</ecNumber>
    </recommendedName>
    <alternativeName>
        <fullName evidence="1">NADH dehydrogenase I subunit C/D</fullName>
    </alternativeName>
    <alternativeName>
        <fullName evidence="1">NDH-1 subunit C/D</fullName>
    </alternativeName>
</protein>
<name>NUOCD_BUCAP</name>
<proteinExistence type="inferred from homology"/>
<organism>
    <name type="scientific">Buchnera aphidicola subsp. Schizaphis graminum (strain Sg)</name>
    <dbReference type="NCBI Taxonomy" id="198804"/>
    <lineage>
        <taxon>Bacteria</taxon>
        <taxon>Pseudomonadati</taxon>
        <taxon>Pseudomonadota</taxon>
        <taxon>Gammaproteobacteria</taxon>
        <taxon>Enterobacterales</taxon>
        <taxon>Erwiniaceae</taxon>
        <taxon>Buchnera</taxon>
    </lineage>
</organism>
<comment type="function">
    <text evidence="1">NDH-1 shuttles electrons from NADH, via FMN and iron-sulfur (Fe-S) centers, to quinones in the respiratory chain. The immediate electron acceptor for the enzyme in this species is believed to be ubiquinone. Couples the redox reaction to proton translocation (for every two electrons transferred, four hydrogen ions are translocated across the cytoplasmic membrane), and thus conserves the redox energy in a proton gradient.</text>
</comment>
<comment type="catalytic activity">
    <reaction evidence="1">
        <text>a quinone + NADH + 5 H(+)(in) = a quinol + NAD(+) + 4 H(+)(out)</text>
        <dbReference type="Rhea" id="RHEA:57888"/>
        <dbReference type="ChEBI" id="CHEBI:15378"/>
        <dbReference type="ChEBI" id="CHEBI:24646"/>
        <dbReference type="ChEBI" id="CHEBI:57540"/>
        <dbReference type="ChEBI" id="CHEBI:57945"/>
        <dbReference type="ChEBI" id="CHEBI:132124"/>
    </reaction>
</comment>
<comment type="subunit">
    <text evidence="1">NDH-1 is composed of 13 different subunits. Subunits NuoB, CD, E, F, and G constitute the peripheral sector of the complex.</text>
</comment>
<comment type="subcellular location">
    <subcellularLocation>
        <location evidence="1">Cell inner membrane</location>
        <topology evidence="1">Peripheral membrane protein</topology>
        <orientation evidence="1">Cytoplasmic side</orientation>
    </subcellularLocation>
</comment>
<comment type="similarity">
    <text evidence="1">In the N-terminal section; belongs to the complex I 30 kDa subunit family.</text>
</comment>
<comment type="similarity">
    <text evidence="1">In the C-terminal section; belongs to the complex I 49 kDa subunit family.</text>
</comment>
<accession>Q8K9Y5</accession>
<feature type="chain" id="PRO_0000118682" description="NADH-quinone oxidoreductase subunit C/D">
    <location>
        <begin position="1"/>
        <end position="597"/>
    </location>
</feature>
<feature type="region of interest" description="NADH dehydrogenase I subunit C" evidence="1">
    <location>
        <begin position="1"/>
        <end position="187"/>
    </location>
</feature>
<feature type="region of interest" description="NADH dehydrogenase I subunit D" evidence="1">
    <location>
        <begin position="211"/>
        <end position="597"/>
    </location>
</feature>
<keyword id="KW-0997">Cell inner membrane</keyword>
<keyword id="KW-1003">Cell membrane</keyword>
<keyword id="KW-0472">Membrane</keyword>
<keyword id="KW-0511">Multifunctional enzyme</keyword>
<keyword id="KW-0520">NAD</keyword>
<keyword id="KW-0874">Quinone</keyword>
<keyword id="KW-1278">Translocase</keyword>
<keyword id="KW-0813">Transport</keyword>
<keyword id="KW-0830">Ubiquinone</keyword>
<dbReference type="EC" id="7.1.1.-" evidence="1"/>
<dbReference type="EMBL" id="AE013218">
    <property type="protein sequence ID" value="AAM67717.1"/>
    <property type="molecule type" value="Genomic_DNA"/>
</dbReference>
<dbReference type="RefSeq" id="WP_011053684.1">
    <property type="nucleotide sequence ID" value="NC_004061.1"/>
</dbReference>
<dbReference type="SMR" id="Q8K9Y5"/>
<dbReference type="STRING" id="198804.BUsg_149"/>
<dbReference type="GeneID" id="93003619"/>
<dbReference type="KEGG" id="bas:BUsg_149"/>
<dbReference type="eggNOG" id="COG0649">
    <property type="taxonomic scope" value="Bacteria"/>
</dbReference>
<dbReference type="eggNOG" id="COG0852">
    <property type="taxonomic scope" value="Bacteria"/>
</dbReference>
<dbReference type="HOGENOM" id="CLU_015134_3_2_6"/>
<dbReference type="Proteomes" id="UP000000416">
    <property type="component" value="Chromosome"/>
</dbReference>
<dbReference type="GO" id="GO:0030964">
    <property type="term" value="C:NADH dehydrogenase complex"/>
    <property type="evidence" value="ECO:0007669"/>
    <property type="project" value="InterPro"/>
</dbReference>
<dbReference type="GO" id="GO:0005886">
    <property type="term" value="C:plasma membrane"/>
    <property type="evidence" value="ECO:0007669"/>
    <property type="project" value="UniProtKB-SubCell"/>
</dbReference>
<dbReference type="GO" id="GO:0051287">
    <property type="term" value="F:NAD binding"/>
    <property type="evidence" value="ECO:0007669"/>
    <property type="project" value="InterPro"/>
</dbReference>
<dbReference type="GO" id="GO:0008137">
    <property type="term" value="F:NADH dehydrogenase (ubiquinone) activity"/>
    <property type="evidence" value="ECO:0007669"/>
    <property type="project" value="InterPro"/>
</dbReference>
<dbReference type="GO" id="GO:0050136">
    <property type="term" value="F:NADH:ubiquinone reductase (non-electrogenic) activity"/>
    <property type="evidence" value="ECO:0007669"/>
    <property type="project" value="UniProtKB-UniRule"/>
</dbReference>
<dbReference type="GO" id="GO:0048038">
    <property type="term" value="F:quinone binding"/>
    <property type="evidence" value="ECO:0007669"/>
    <property type="project" value="UniProtKB-KW"/>
</dbReference>
<dbReference type="FunFam" id="1.10.645.10:FF:000001">
    <property type="entry name" value="NADH-quinone oxidoreductase subunit C/D"/>
    <property type="match status" value="1"/>
</dbReference>
<dbReference type="Gene3D" id="1.10.645.10">
    <property type="entry name" value="Cytochrome-c3 Hydrogenase, chain B"/>
    <property type="match status" value="1"/>
</dbReference>
<dbReference type="Gene3D" id="3.30.460.80">
    <property type="entry name" value="NADH:ubiquinone oxidoreductase, 30kDa subunit"/>
    <property type="match status" value="1"/>
</dbReference>
<dbReference type="HAMAP" id="MF_01359">
    <property type="entry name" value="NDH1_NuoCD_1"/>
    <property type="match status" value="1"/>
</dbReference>
<dbReference type="HAMAP" id="MF_01358">
    <property type="entry name" value="NDH1_NuoD"/>
    <property type="match status" value="1"/>
</dbReference>
<dbReference type="InterPro" id="IPR010218">
    <property type="entry name" value="NADH_DH_suC"/>
</dbReference>
<dbReference type="InterPro" id="IPR023062">
    <property type="entry name" value="NADH_DH_suCD"/>
</dbReference>
<dbReference type="InterPro" id="IPR001135">
    <property type="entry name" value="NADH_Q_OxRdtase_suD"/>
</dbReference>
<dbReference type="InterPro" id="IPR037232">
    <property type="entry name" value="NADH_quin_OxRdtase_su_C/D-like"/>
</dbReference>
<dbReference type="InterPro" id="IPR001268">
    <property type="entry name" value="NADH_UbQ_OxRdtase_30kDa_su"/>
</dbReference>
<dbReference type="InterPro" id="IPR014029">
    <property type="entry name" value="NADH_UbQ_OxRdtase_49kDa_CS"/>
</dbReference>
<dbReference type="InterPro" id="IPR022885">
    <property type="entry name" value="NDH1_su_D/H"/>
</dbReference>
<dbReference type="InterPro" id="IPR029014">
    <property type="entry name" value="NiFe-Hase_large"/>
</dbReference>
<dbReference type="NCBIfam" id="TIGR01961">
    <property type="entry name" value="NuoC_fam"/>
    <property type="match status" value="1"/>
</dbReference>
<dbReference type="NCBIfam" id="TIGR01962">
    <property type="entry name" value="NuoD"/>
    <property type="match status" value="1"/>
</dbReference>
<dbReference type="NCBIfam" id="NF004739">
    <property type="entry name" value="PRK06075.1"/>
    <property type="match status" value="1"/>
</dbReference>
<dbReference type="NCBIfam" id="NF008728">
    <property type="entry name" value="PRK11742.1"/>
    <property type="match status" value="1"/>
</dbReference>
<dbReference type="PANTHER" id="PTHR11993:SF45">
    <property type="entry name" value="NADH-QUINONE OXIDOREDUCTASE SUBUNIT C_D"/>
    <property type="match status" value="1"/>
</dbReference>
<dbReference type="PANTHER" id="PTHR11993">
    <property type="entry name" value="NADH-UBIQUINONE OXIDOREDUCTASE 49 KDA SUBUNIT"/>
    <property type="match status" value="1"/>
</dbReference>
<dbReference type="Pfam" id="PF00329">
    <property type="entry name" value="Complex1_30kDa"/>
    <property type="match status" value="1"/>
</dbReference>
<dbReference type="Pfam" id="PF00346">
    <property type="entry name" value="Complex1_49kDa"/>
    <property type="match status" value="1"/>
</dbReference>
<dbReference type="SUPFAM" id="SSF56762">
    <property type="entry name" value="HydB/Nqo4-like"/>
    <property type="match status" value="1"/>
</dbReference>
<dbReference type="SUPFAM" id="SSF143243">
    <property type="entry name" value="Nqo5-like"/>
    <property type="match status" value="1"/>
</dbReference>
<dbReference type="PROSITE" id="PS00535">
    <property type="entry name" value="COMPLEX1_49K"/>
    <property type="match status" value="1"/>
</dbReference>
<sequence>MIDENKKKNTNLNKNEYEEKSILKDLFHFFGKDFCVVQDTCIDFPVIWINKSLLLKVGKFLSSSPKPYNMLFDLHGVDERFRLNRLNLPEADFSIFYHLISIERNSDILIKVPLLKDDLNVSTFISLFPNANWYERETWEMFGIIFDQHPNLTHIIMPNEWKGFPLRKDYPARATEHESFFLDEQKEDLEMENLRFKPELWGMKRKNDNVDFMFLNLGPNHPSAHGAFRIVLQLDGENIVDCVPDIGYHHRGAEKMAERQSWHSYIPYTDRIEYLGGCVNEMPYVLAVEKLANISVPEKVEVIRVMLSELFRINSHLLYISTFIQDVGCMTPVFLAFTDRQKIYDLIEAITGARMHPAWFRIGGVAHDLPKGWNVLLKEFLEWMPKRLKYYVQLALENPILIRRSKGIAQYNQKEALQWGVTGSGLRSTGLDLDVRKWRPYSGYQNYTFEIPIGQGISDCYSRVIIKVEEIYQSLSILKQCLKNMPEGPFKSDHPLTTPPPKERVLKDIDTMITHFLQVSWGPVIPANESFQMIEATKGINSYYLISDGGTMSYRTRIRTPSFPHLQQIPSVIRGSLISDLIVYLGSIDFVMSDVDR</sequence>
<reference key="1">
    <citation type="journal article" date="2002" name="Science">
        <title>50 million years of genomic stasis in endosymbiotic bacteria.</title>
        <authorList>
            <person name="Tamas I."/>
            <person name="Klasson L."/>
            <person name="Canbaeck B."/>
            <person name="Naeslund A.K."/>
            <person name="Eriksson A.-S."/>
            <person name="Wernegreen J.J."/>
            <person name="Sandstroem J.P."/>
            <person name="Moran N.A."/>
            <person name="Andersson S.G.E."/>
        </authorList>
    </citation>
    <scope>NUCLEOTIDE SEQUENCE [LARGE SCALE GENOMIC DNA]</scope>
    <source>
        <strain>Sg</strain>
    </source>
</reference>
<gene>
    <name evidence="1" type="primary">nuoC</name>
    <name evidence="1" type="synonym">nuoCD</name>
    <name evidence="1" type="synonym">nuoD</name>
    <name type="ordered locus">BUsg_149</name>
</gene>
<evidence type="ECO:0000255" key="1">
    <source>
        <dbReference type="HAMAP-Rule" id="MF_01359"/>
    </source>
</evidence>